<reference key="1">
    <citation type="journal article" date="2009" name="Genome Res.">
        <title>Newly introduced genomic prophage islands are critical determinants of in vivo competitiveness in the Liverpool epidemic strain of Pseudomonas aeruginosa.</title>
        <authorList>
            <person name="Winstanley C."/>
            <person name="Langille M.G.I."/>
            <person name="Fothergill J.L."/>
            <person name="Kukavica-Ibrulj I."/>
            <person name="Paradis-Bleau C."/>
            <person name="Sanschagrin F."/>
            <person name="Thomson N.R."/>
            <person name="Winsor G.L."/>
            <person name="Quail M.A."/>
            <person name="Lennard N."/>
            <person name="Bignell A."/>
            <person name="Clarke L."/>
            <person name="Seeger K."/>
            <person name="Saunders D."/>
            <person name="Harris D."/>
            <person name="Parkhill J."/>
            <person name="Hancock R.E.W."/>
            <person name="Brinkman F.S.L."/>
            <person name="Levesque R.C."/>
        </authorList>
    </citation>
    <scope>NUCLEOTIDE SEQUENCE [LARGE SCALE GENOMIC DNA]</scope>
    <source>
        <strain>LESB58</strain>
    </source>
</reference>
<protein>
    <recommendedName>
        <fullName evidence="1">Histidine ammonia-lyase</fullName>
        <shortName evidence="1">Histidase</shortName>
        <ecNumber evidence="1">4.3.1.3</ecNumber>
    </recommendedName>
</protein>
<evidence type="ECO:0000255" key="1">
    <source>
        <dbReference type="HAMAP-Rule" id="MF_00229"/>
    </source>
</evidence>
<organism>
    <name type="scientific">Pseudomonas aeruginosa (strain LESB58)</name>
    <dbReference type="NCBI Taxonomy" id="557722"/>
    <lineage>
        <taxon>Bacteria</taxon>
        <taxon>Pseudomonadati</taxon>
        <taxon>Pseudomonadota</taxon>
        <taxon>Gammaproteobacteria</taxon>
        <taxon>Pseudomonadales</taxon>
        <taxon>Pseudomonadaceae</taxon>
        <taxon>Pseudomonas</taxon>
    </lineage>
</organism>
<sequence length="509" mass="53780">MSLHLKPGQLTLADLRQAYLAPVRLSLDPSADAPIAASVACVENIIAEGRTAYGINTGFGLLASTRISPADLEKLQRSIVLSHAAGVGEALDDAMVRLVMLLKVNSLARGFSGIRRKVIDALIALINAEVYPHIPLKGSVGASGDLAPLAHMSLVLIGESRARHRGEWLPAAEALAVAGLEPLTLAAKEGLALLNGTQVSTAYALRGLFEAEDLFAAATVCGGLSVEAMLGSRAPFDARIHAARGQRGQIDVAAAYRDLLTASSEVARSHEKCDKVQDPYSLRCQPQVMGACLTQMRQAAEVLEIEANAVSDNPLVFAAEGDVISGGNFHAEPVAMAADNLALALAEIGSLSERRISLMMDMHMSQLPPFLVANGGVNSGFMIAQVTAAALASDNKALAHPASVDSLPTSANQEDHVSMAPNAGKRLWAMAENVRGILAVEWLGACQGLDFREGLKSSPKLEQARRLLRDKVPYYQEDRFFAPDIEAASQLLASGCLNALLPARLLPSL</sequence>
<feature type="chain" id="PRO_1000190491" description="Histidine ammonia-lyase">
    <location>
        <begin position="1"/>
        <end position="509"/>
    </location>
</feature>
<feature type="modified residue" description="2,3-didehydroalanine (Ser)" evidence="1">
    <location>
        <position position="143"/>
    </location>
</feature>
<feature type="cross-link" description="5-imidazolinone (Ala-Gly)" evidence="1">
    <location>
        <begin position="142"/>
        <end position="144"/>
    </location>
</feature>
<name>HUTH_PSEA8</name>
<keyword id="KW-0963">Cytoplasm</keyword>
<keyword id="KW-0369">Histidine metabolism</keyword>
<keyword id="KW-0456">Lyase</keyword>
<comment type="catalytic activity">
    <reaction evidence="1">
        <text>L-histidine = trans-urocanate + NH4(+)</text>
        <dbReference type="Rhea" id="RHEA:21232"/>
        <dbReference type="ChEBI" id="CHEBI:17771"/>
        <dbReference type="ChEBI" id="CHEBI:28938"/>
        <dbReference type="ChEBI" id="CHEBI:57595"/>
        <dbReference type="EC" id="4.3.1.3"/>
    </reaction>
</comment>
<comment type="pathway">
    <text evidence="1">Amino-acid degradation; L-histidine degradation into L-glutamate; N-formimidoyl-L-glutamate from L-histidine: step 1/3.</text>
</comment>
<comment type="subcellular location">
    <subcellularLocation>
        <location evidence="1">Cytoplasm</location>
    </subcellularLocation>
</comment>
<comment type="PTM">
    <text evidence="1">Contains an active site 4-methylidene-imidazol-5-one (MIO), which is formed autocatalytically by cyclization and dehydration of residues Ala-Ser-Gly.</text>
</comment>
<comment type="similarity">
    <text evidence="1">Belongs to the PAL/histidase family.</text>
</comment>
<accession>B7V3J1</accession>
<gene>
    <name evidence="1" type="primary">hutH</name>
    <name type="ordered locus">PLES_54881</name>
</gene>
<dbReference type="EC" id="4.3.1.3" evidence="1"/>
<dbReference type="EMBL" id="FM209186">
    <property type="protein sequence ID" value="CAW30242.1"/>
    <property type="molecule type" value="Genomic_DNA"/>
</dbReference>
<dbReference type="RefSeq" id="WP_003114461.1">
    <property type="nucleotide sequence ID" value="NC_011770.1"/>
</dbReference>
<dbReference type="SMR" id="B7V3J1"/>
<dbReference type="KEGG" id="pag:PLES_54881"/>
<dbReference type="HOGENOM" id="CLU_014801_4_0_6"/>
<dbReference type="UniPathway" id="UPA00379">
    <property type="reaction ID" value="UER00549"/>
</dbReference>
<dbReference type="GO" id="GO:0005737">
    <property type="term" value="C:cytoplasm"/>
    <property type="evidence" value="ECO:0007669"/>
    <property type="project" value="UniProtKB-SubCell"/>
</dbReference>
<dbReference type="GO" id="GO:0004397">
    <property type="term" value="F:histidine ammonia-lyase activity"/>
    <property type="evidence" value="ECO:0007669"/>
    <property type="project" value="UniProtKB-UniRule"/>
</dbReference>
<dbReference type="GO" id="GO:0019556">
    <property type="term" value="P:L-histidine catabolic process to glutamate and formamide"/>
    <property type="evidence" value="ECO:0007669"/>
    <property type="project" value="UniProtKB-UniPathway"/>
</dbReference>
<dbReference type="GO" id="GO:0019557">
    <property type="term" value="P:L-histidine catabolic process to glutamate and formate"/>
    <property type="evidence" value="ECO:0007669"/>
    <property type="project" value="UniProtKB-UniPathway"/>
</dbReference>
<dbReference type="CDD" id="cd00332">
    <property type="entry name" value="PAL-HAL"/>
    <property type="match status" value="1"/>
</dbReference>
<dbReference type="FunFam" id="1.10.275.10:FF:000005">
    <property type="entry name" value="Histidine ammonia-lyase"/>
    <property type="match status" value="1"/>
</dbReference>
<dbReference type="FunFam" id="1.20.200.10:FF:000003">
    <property type="entry name" value="Histidine ammonia-lyase"/>
    <property type="match status" value="1"/>
</dbReference>
<dbReference type="Gene3D" id="1.20.200.10">
    <property type="entry name" value="Fumarase/aspartase (Central domain)"/>
    <property type="match status" value="1"/>
</dbReference>
<dbReference type="Gene3D" id="1.10.275.10">
    <property type="entry name" value="Fumarase/aspartase (N-terminal domain)"/>
    <property type="match status" value="1"/>
</dbReference>
<dbReference type="HAMAP" id="MF_00229">
    <property type="entry name" value="His_ammonia_lyase"/>
    <property type="match status" value="1"/>
</dbReference>
<dbReference type="InterPro" id="IPR001106">
    <property type="entry name" value="Aromatic_Lyase"/>
</dbReference>
<dbReference type="InterPro" id="IPR024083">
    <property type="entry name" value="Fumarase/histidase_N"/>
</dbReference>
<dbReference type="InterPro" id="IPR005921">
    <property type="entry name" value="HutH"/>
</dbReference>
<dbReference type="InterPro" id="IPR008948">
    <property type="entry name" value="L-Aspartase-like"/>
</dbReference>
<dbReference type="InterPro" id="IPR022313">
    <property type="entry name" value="Phe/His_NH3-lyase_AS"/>
</dbReference>
<dbReference type="NCBIfam" id="TIGR01225">
    <property type="entry name" value="hutH"/>
    <property type="match status" value="1"/>
</dbReference>
<dbReference type="NCBIfam" id="NF006871">
    <property type="entry name" value="PRK09367.1"/>
    <property type="match status" value="1"/>
</dbReference>
<dbReference type="PANTHER" id="PTHR10362">
    <property type="entry name" value="HISTIDINE AMMONIA-LYASE"/>
    <property type="match status" value="1"/>
</dbReference>
<dbReference type="Pfam" id="PF00221">
    <property type="entry name" value="Lyase_aromatic"/>
    <property type="match status" value="1"/>
</dbReference>
<dbReference type="SUPFAM" id="SSF48557">
    <property type="entry name" value="L-aspartase-like"/>
    <property type="match status" value="1"/>
</dbReference>
<dbReference type="PROSITE" id="PS00488">
    <property type="entry name" value="PAL_HISTIDASE"/>
    <property type="match status" value="1"/>
</dbReference>
<proteinExistence type="inferred from homology"/>